<protein>
    <recommendedName>
        <fullName>Synaptojanin-2-binding protein</fullName>
    </recommendedName>
    <alternativeName>
        <fullName>Mitochondrial outer membrane protein 25</fullName>
    </alternativeName>
</protein>
<name>SYJ2B_HUMAN</name>
<feature type="chain" id="PRO_0000072383" description="Synaptojanin-2-binding protein">
    <location>
        <begin position="1"/>
        <end position="145"/>
    </location>
</feature>
<feature type="topological domain" description="Cytoplasmic" evidence="3">
    <location>
        <begin position="1"/>
        <end position="117"/>
    </location>
</feature>
<feature type="transmembrane region" description="Helical" evidence="3">
    <location>
        <begin position="118"/>
        <end position="138"/>
    </location>
</feature>
<feature type="topological domain" description="Mitochondrial intermembrane" evidence="3">
    <location>
        <begin position="139"/>
        <end position="145"/>
    </location>
</feature>
<feature type="domain" description="PDZ" evidence="4">
    <location>
        <begin position="13"/>
        <end position="100"/>
    </location>
</feature>
<feature type="sequence variant" id="VAR_051394" description="In dbSNP:rs4356408.">
    <original>V</original>
    <variation>I</variation>
    <location>
        <position position="9"/>
    </location>
</feature>
<feature type="sequence conflict" description="In Ref. 2; BAA92098." evidence="8" ref="2">
    <original>V</original>
    <variation>A</variation>
    <location>
        <position position="68"/>
    </location>
</feature>
<feature type="helix" evidence="10">
    <location>
        <begin position="6"/>
        <end position="8"/>
    </location>
</feature>
<feature type="strand" evidence="10">
    <location>
        <begin position="9"/>
        <end position="17"/>
    </location>
</feature>
<feature type="strand" evidence="9">
    <location>
        <begin position="20"/>
        <end position="22"/>
    </location>
</feature>
<feature type="strand" evidence="10">
    <location>
        <begin position="25"/>
        <end position="29"/>
    </location>
</feature>
<feature type="turn" evidence="12">
    <location>
        <begin position="31"/>
        <end position="33"/>
    </location>
</feature>
<feature type="strand" evidence="11">
    <location>
        <begin position="35"/>
        <end position="38"/>
    </location>
</feature>
<feature type="strand" evidence="10">
    <location>
        <begin position="42"/>
        <end position="47"/>
    </location>
</feature>
<feature type="strand" evidence="9">
    <location>
        <begin position="49"/>
        <end position="51"/>
    </location>
</feature>
<feature type="helix" evidence="10">
    <location>
        <begin position="52"/>
        <end position="56"/>
    </location>
</feature>
<feature type="strand" evidence="10">
    <location>
        <begin position="64"/>
        <end position="68"/>
    </location>
</feature>
<feature type="helix" evidence="10">
    <location>
        <begin position="78"/>
        <end position="86"/>
    </location>
</feature>
<feature type="strand" evidence="10">
    <location>
        <begin position="90"/>
        <end position="100"/>
    </location>
</feature>
<gene>
    <name type="primary">SYNJ2BP</name>
    <name evidence="7" type="synonym">OMP25</name>
</gene>
<keyword id="KW-0002">3D-structure</keyword>
<keyword id="KW-0472">Membrane</keyword>
<keyword id="KW-0496">Mitochondrion</keyword>
<keyword id="KW-1000">Mitochondrion outer membrane</keyword>
<keyword id="KW-1267">Proteomics identification</keyword>
<keyword id="KW-1185">Reference proteome</keyword>
<keyword id="KW-0812">Transmembrane</keyword>
<keyword id="KW-1133">Transmembrane helix</keyword>
<reference key="1">
    <citation type="submission" date="2004-01" db="EMBL/GenBank/DDBJ databases">
        <title>Cloning of a novel protein interacting with activin receptor II A.</title>
        <authorList>
            <person name="Yang Y."/>
            <person name="Tai G.X."/>
            <person name="Xu G.Y."/>
            <person name="Zhang P.Y."/>
            <person name="Liu Z.H."/>
        </authorList>
    </citation>
    <scope>NUCLEOTIDE SEQUENCE [MRNA]</scope>
</reference>
<reference key="2">
    <citation type="journal article" date="2004" name="Nat. Genet.">
        <title>Complete sequencing and characterization of 21,243 full-length human cDNAs.</title>
        <authorList>
            <person name="Ota T."/>
            <person name="Suzuki Y."/>
            <person name="Nishikawa T."/>
            <person name="Otsuki T."/>
            <person name="Sugiyama T."/>
            <person name="Irie R."/>
            <person name="Wakamatsu A."/>
            <person name="Hayashi K."/>
            <person name="Sato H."/>
            <person name="Nagai K."/>
            <person name="Kimura K."/>
            <person name="Makita H."/>
            <person name="Sekine M."/>
            <person name="Obayashi M."/>
            <person name="Nishi T."/>
            <person name="Shibahara T."/>
            <person name="Tanaka T."/>
            <person name="Ishii S."/>
            <person name="Yamamoto J."/>
            <person name="Saito K."/>
            <person name="Kawai Y."/>
            <person name="Isono Y."/>
            <person name="Nakamura Y."/>
            <person name="Nagahari K."/>
            <person name="Murakami K."/>
            <person name="Yasuda T."/>
            <person name="Iwayanagi T."/>
            <person name="Wagatsuma M."/>
            <person name="Shiratori A."/>
            <person name="Sudo H."/>
            <person name="Hosoiri T."/>
            <person name="Kaku Y."/>
            <person name="Kodaira H."/>
            <person name="Kondo H."/>
            <person name="Sugawara M."/>
            <person name="Takahashi M."/>
            <person name="Kanda K."/>
            <person name="Yokoi T."/>
            <person name="Furuya T."/>
            <person name="Kikkawa E."/>
            <person name="Omura Y."/>
            <person name="Abe K."/>
            <person name="Kamihara K."/>
            <person name="Katsuta N."/>
            <person name="Sato K."/>
            <person name="Tanikawa M."/>
            <person name="Yamazaki M."/>
            <person name="Ninomiya K."/>
            <person name="Ishibashi T."/>
            <person name="Yamashita H."/>
            <person name="Murakawa K."/>
            <person name="Fujimori K."/>
            <person name="Tanai H."/>
            <person name="Kimata M."/>
            <person name="Watanabe M."/>
            <person name="Hiraoka S."/>
            <person name="Chiba Y."/>
            <person name="Ishida S."/>
            <person name="Ono Y."/>
            <person name="Takiguchi S."/>
            <person name="Watanabe S."/>
            <person name="Yosida M."/>
            <person name="Hotuta T."/>
            <person name="Kusano J."/>
            <person name="Kanehori K."/>
            <person name="Takahashi-Fujii A."/>
            <person name="Hara H."/>
            <person name="Tanase T.-O."/>
            <person name="Nomura Y."/>
            <person name="Togiya S."/>
            <person name="Komai F."/>
            <person name="Hara R."/>
            <person name="Takeuchi K."/>
            <person name="Arita M."/>
            <person name="Imose N."/>
            <person name="Musashino K."/>
            <person name="Yuuki H."/>
            <person name="Oshima A."/>
            <person name="Sasaki N."/>
            <person name="Aotsuka S."/>
            <person name="Yoshikawa Y."/>
            <person name="Matsunawa H."/>
            <person name="Ichihara T."/>
            <person name="Shiohata N."/>
            <person name="Sano S."/>
            <person name="Moriya S."/>
            <person name="Momiyama H."/>
            <person name="Satoh N."/>
            <person name="Takami S."/>
            <person name="Terashima Y."/>
            <person name="Suzuki O."/>
            <person name="Nakagawa S."/>
            <person name="Senoh A."/>
            <person name="Mizoguchi H."/>
            <person name="Goto Y."/>
            <person name="Shimizu F."/>
            <person name="Wakebe H."/>
            <person name="Hishigaki H."/>
            <person name="Watanabe T."/>
            <person name="Sugiyama A."/>
            <person name="Takemoto M."/>
            <person name="Kawakami B."/>
            <person name="Yamazaki M."/>
            <person name="Watanabe K."/>
            <person name="Kumagai A."/>
            <person name="Itakura S."/>
            <person name="Fukuzumi Y."/>
            <person name="Fujimori Y."/>
            <person name="Komiyama M."/>
            <person name="Tashiro H."/>
            <person name="Tanigami A."/>
            <person name="Fujiwara T."/>
            <person name="Ono T."/>
            <person name="Yamada K."/>
            <person name="Fujii Y."/>
            <person name="Ozaki K."/>
            <person name="Hirao M."/>
            <person name="Ohmori Y."/>
            <person name="Kawabata A."/>
            <person name="Hikiji T."/>
            <person name="Kobatake N."/>
            <person name="Inagaki H."/>
            <person name="Ikema Y."/>
            <person name="Okamoto S."/>
            <person name="Okitani R."/>
            <person name="Kawakami T."/>
            <person name="Noguchi S."/>
            <person name="Itoh T."/>
            <person name="Shigeta K."/>
            <person name="Senba T."/>
            <person name="Matsumura K."/>
            <person name="Nakajima Y."/>
            <person name="Mizuno T."/>
            <person name="Morinaga M."/>
            <person name="Sasaki M."/>
            <person name="Togashi T."/>
            <person name="Oyama M."/>
            <person name="Hata H."/>
            <person name="Watanabe M."/>
            <person name="Komatsu T."/>
            <person name="Mizushima-Sugano J."/>
            <person name="Satoh T."/>
            <person name="Shirai Y."/>
            <person name="Takahashi Y."/>
            <person name="Nakagawa K."/>
            <person name="Okumura K."/>
            <person name="Nagase T."/>
            <person name="Nomura N."/>
            <person name="Kikuchi H."/>
            <person name="Masuho Y."/>
            <person name="Yamashita R."/>
            <person name="Nakai K."/>
            <person name="Yada T."/>
            <person name="Nakamura Y."/>
            <person name="Ohara O."/>
            <person name="Isogai T."/>
            <person name="Sugano S."/>
        </authorList>
    </citation>
    <scope>NUCLEOTIDE SEQUENCE [LARGE SCALE MRNA]</scope>
    <source>
        <tissue>Placenta</tissue>
    </source>
</reference>
<reference key="3">
    <citation type="submission" date="2005-07" db="EMBL/GenBank/DDBJ databases">
        <authorList>
            <person name="Mural R.J."/>
            <person name="Istrail S."/>
            <person name="Sutton G.G."/>
            <person name="Florea L."/>
            <person name="Halpern A.L."/>
            <person name="Mobarry C.M."/>
            <person name="Lippert R."/>
            <person name="Walenz B."/>
            <person name="Shatkay H."/>
            <person name="Dew I."/>
            <person name="Miller J.R."/>
            <person name="Flanigan M.J."/>
            <person name="Edwards N.J."/>
            <person name="Bolanos R."/>
            <person name="Fasulo D."/>
            <person name="Halldorsson B.V."/>
            <person name="Hannenhalli S."/>
            <person name="Turner R."/>
            <person name="Yooseph S."/>
            <person name="Lu F."/>
            <person name="Nusskern D.R."/>
            <person name="Shue B.C."/>
            <person name="Zheng X.H."/>
            <person name="Zhong F."/>
            <person name="Delcher A.L."/>
            <person name="Huson D.H."/>
            <person name="Kravitz S.A."/>
            <person name="Mouchard L."/>
            <person name="Reinert K."/>
            <person name="Remington K.A."/>
            <person name="Clark A.G."/>
            <person name="Waterman M.S."/>
            <person name="Eichler E.E."/>
            <person name="Adams M.D."/>
            <person name="Hunkapiller M.W."/>
            <person name="Myers E.W."/>
            <person name="Venter J.C."/>
        </authorList>
    </citation>
    <scope>NUCLEOTIDE SEQUENCE [LARGE SCALE GENOMIC DNA]</scope>
</reference>
<reference key="4">
    <citation type="journal article" date="2004" name="Genome Res.">
        <title>The status, quality, and expansion of the NIH full-length cDNA project: the Mammalian Gene Collection (MGC).</title>
        <authorList>
            <consortium name="The MGC Project Team"/>
        </authorList>
    </citation>
    <scope>NUCLEOTIDE SEQUENCE [LARGE SCALE MRNA]</scope>
    <source>
        <tissue>Ovary</tissue>
    </source>
</reference>
<reference key="5">
    <citation type="journal article" date="2013" name="Circ. Res.">
        <title>Synaptojanin-2 binding protein stabilizes the Notch ligands DLL1 and DLL4 and inhibits sprouting angiogenesis.</title>
        <authorList>
            <person name="Adam M.G."/>
            <person name="Berger C."/>
            <person name="Feldner A."/>
            <person name="Yang W.J."/>
            <person name="Wuestehube-Lausch J."/>
            <person name="Herberich S.E."/>
            <person name="Pinder M."/>
            <person name="Gesierich S."/>
            <person name="Hammes H.P."/>
            <person name="Augustin H.G."/>
            <person name="Fischer A."/>
        </authorList>
    </citation>
    <scope>INTERACTION WITH DLL1</scope>
</reference>
<reference key="6">
    <citation type="journal article" date="2020" name="Science">
        <title>The endoplasmic reticulum P5A-ATPase is a transmembrane helix dislocase.</title>
        <authorList>
            <person name="McKenna M.J."/>
            <person name="Sim S.I."/>
            <person name="Ordureau A."/>
            <person name="Wei L."/>
            <person name="Harper J.W."/>
            <person name="Shao S."/>
            <person name="Park E."/>
        </authorList>
    </citation>
    <scope>SUBCELLULAR LOCATION</scope>
</reference>
<reference key="7">
    <citation type="submission" date="2007-03" db="PDB data bank">
        <title>Solution structure of the PDZ domain from human synaptojanin 2 binding protein.</title>
        <authorList>
            <consortium name="RIKEN structural genomics initiative (RSGI)"/>
        </authorList>
    </citation>
    <scope>STRUCTURE BY NMR OF 1-113</scope>
</reference>
<reference key="8">
    <citation type="submission" date="2007-06" db="PDB data bank">
        <title>Crystal structure of PDZ domain of synaptojanin-2 binding protein.</title>
        <authorList>
            <person name="Tickle J."/>
            <person name="Phillips C."/>
            <person name="Pike A.C.W."/>
            <person name="Cooper C."/>
            <person name="Salah E."/>
            <person name="Elkins J."/>
            <person name="Turnbull A.P."/>
            <person name="Edwards A."/>
            <person name="Arrowsmith C.H."/>
            <person name="Weigelt J."/>
            <person name="Sundstrom M."/>
            <person name="Doyle D."/>
        </authorList>
    </citation>
    <scope>X-RAY CRYSTALLOGRAPHY (1.35 ANGSTROMS) OF 5-101</scope>
</reference>
<evidence type="ECO:0000250" key="1">
    <source>
        <dbReference type="UniProtKB" id="Q9D6K5"/>
    </source>
</evidence>
<evidence type="ECO:0000250" key="2">
    <source>
        <dbReference type="UniProtKB" id="Q9WVJ4"/>
    </source>
</evidence>
<evidence type="ECO:0000255" key="3"/>
<evidence type="ECO:0000255" key="4">
    <source>
        <dbReference type="PROSITE-ProRule" id="PRU00143"/>
    </source>
</evidence>
<evidence type="ECO:0000269" key="5">
    <source>
    </source>
</evidence>
<evidence type="ECO:0000269" key="6">
    <source>
    </source>
</evidence>
<evidence type="ECO:0000303" key="7">
    <source>
    </source>
</evidence>
<evidence type="ECO:0000305" key="8"/>
<evidence type="ECO:0007829" key="9">
    <source>
        <dbReference type="PDB" id="2ENO"/>
    </source>
</evidence>
<evidence type="ECO:0007829" key="10">
    <source>
        <dbReference type="PDB" id="2JIK"/>
    </source>
</evidence>
<evidence type="ECO:0007829" key="11">
    <source>
        <dbReference type="PDB" id="7P73"/>
    </source>
</evidence>
<evidence type="ECO:0007829" key="12">
    <source>
        <dbReference type="PDB" id="7PC9"/>
    </source>
</evidence>
<accession>P57105</accession>
<accession>Q49SH3</accession>
<accession>Q96IA4</accession>
<comment type="function">
    <text evidence="1">Regulates endocytosis of activin type 2 receptor kinases through the Ral/RALBP1-dependent pathway and may be involved in suppression of activin-induced signal transduction.</text>
</comment>
<comment type="subunit">
    <text evidence="1 2 5">Binds (via the PDZ domain) to isoform 2A of SYNJ2 (via the unique motif in the C-terminus) (By similarity). Interacts (via C-terminus) with RALBP1. Interacts (via PDZ domain) with ACVR2A (via C-terminus) and ACVR2B (via C-terminus). Forms a ternary complex with ACVR2A and RALBP1 (By similarity). Interacts with MAPK12 (By similarity). Interacts with DLL1; enhances DLL1 protein stability, and promotes notch signaling in endothelial cells (PubMed:24025447).</text>
</comment>
<comment type="interaction">
    <interactant intactId="EBI-1049004">
        <id>P57105</id>
    </interactant>
    <interactant intactId="EBI-13059134">
        <id>Q13520</id>
        <label>AQP6</label>
    </interactant>
    <organismsDiffer>false</organismsDiffer>
    <experiments>3</experiments>
</comment>
<comment type="interaction">
    <interactant intactId="EBI-1049004">
        <id>P57105</id>
    </interactant>
    <interactant intactId="EBI-7797864">
        <id>P11912</id>
        <label>CD79A</label>
    </interactant>
    <organismsDiffer>false</organismsDiffer>
    <experiments>3</experiments>
</comment>
<comment type="interaction">
    <interactant intactId="EBI-1049004">
        <id>P57105</id>
    </interactant>
    <interactant intactId="EBI-18013275">
        <id>Q7Z7G2</id>
        <label>CPLX4</label>
    </interactant>
    <organismsDiffer>false</organismsDiffer>
    <experiments>3</experiments>
</comment>
<comment type="interaction">
    <interactant intactId="EBI-1049004">
        <id>P57105</id>
    </interactant>
    <interactant intactId="EBI-6942903">
        <id>Q96BA8</id>
        <label>CREB3L1</label>
    </interactant>
    <organismsDiffer>false</organismsDiffer>
    <experiments>3</experiments>
</comment>
<comment type="interaction">
    <interactant intactId="EBI-1049004">
        <id>P57105</id>
    </interactant>
    <interactant intactId="EBI-8646596">
        <id>P49447</id>
        <label>CYB561</label>
    </interactant>
    <organismsDiffer>false</organismsDiffer>
    <experiments>3</experiments>
</comment>
<comment type="interaction">
    <interactant intactId="EBI-1049004">
        <id>P57105</id>
    </interactant>
    <interactant intactId="EBI-11700027">
        <id>Q9NR61</id>
        <label>DLL4</label>
    </interactant>
    <organismsDiffer>false</organismsDiffer>
    <experiments>3</experiments>
</comment>
<comment type="interaction">
    <interactant intactId="EBI-1049004">
        <id>P57105</id>
    </interactant>
    <interactant intactId="EBI-3915253">
        <id>Q15125</id>
        <label>EBP</label>
    </interactant>
    <organismsDiffer>false</organismsDiffer>
    <experiments>3</experiments>
</comment>
<comment type="interaction">
    <interactant intactId="EBI-1049004">
        <id>P57105</id>
    </interactant>
    <interactant intactId="EBI-11037623">
        <id>Q9NYP7</id>
        <label>ELOVL5</label>
    </interactant>
    <organismsDiffer>false</organismsDiffer>
    <experiments>3</experiments>
</comment>
<comment type="interaction">
    <interactant intactId="EBI-1049004">
        <id>P57105</id>
    </interactant>
    <interactant intactId="EBI-10285373">
        <id>A1L3X0</id>
        <label>ELOVL7</label>
    </interactant>
    <organismsDiffer>false</organismsDiffer>
    <experiments>3</experiments>
</comment>
<comment type="interaction">
    <interactant intactId="EBI-1049004">
        <id>P57105</id>
    </interactant>
    <interactant intactId="EBI-781551">
        <id>Q9Y282</id>
        <label>ERGIC3</label>
    </interactant>
    <organismsDiffer>false</organismsDiffer>
    <experiments>3</experiments>
</comment>
<comment type="interaction">
    <interactant intactId="EBI-1049004">
        <id>P57105</id>
    </interactant>
    <interactant intactId="EBI-18938272">
        <id>Q96KR6</id>
        <label>FAM210B</label>
    </interactant>
    <organismsDiffer>false</organismsDiffer>
    <experiments>3</experiments>
</comment>
<comment type="interaction">
    <interactant intactId="EBI-1049004">
        <id>P57105</id>
    </interactant>
    <interactant intactId="EBI-2820517">
        <id>Q8TAF8</id>
        <label>LHFPL5</label>
    </interactant>
    <organismsDiffer>false</organismsDiffer>
    <experiments>3</experiments>
</comment>
<comment type="interaction">
    <interactant intactId="EBI-1049004">
        <id>P57105</id>
    </interactant>
    <interactant intactId="EBI-1050881">
        <id>Q5VYS4</id>
        <label>MEDAG</label>
    </interactant>
    <organismsDiffer>false</organismsDiffer>
    <experiments>3</experiments>
</comment>
<comment type="interaction">
    <interactant intactId="EBI-1049004">
        <id>P57105</id>
    </interactant>
    <interactant intactId="EBI-7545592">
        <id>Q9H6H4</id>
        <label>REEP4</label>
    </interactant>
    <organismsDiffer>false</organismsDiffer>
    <experiments>3</experiments>
</comment>
<comment type="interaction">
    <interactant intactId="EBI-1049004">
        <id>P57105</id>
    </interactant>
    <interactant intactId="EBI-18159983">
        <id>Q3KNW5</id>
        <label>SLC10A6</label>
    </interactant>
    <organismsDiffer>false</organismsDiffer>
    <experiments>3</experiments>
</comment>
<comment type="interaction">
    <interactant intactId="EBI-1049004">
        <id>P57105</id>
    </interactant>
    <interactant intactId="EBI-13292283">
        <id>Q9UHI5</id>
        <label>SLC7A8</label>
    </interactant>
    <organismsDiffer>false</organismsDiffer>
    <experiments>3</experiments>
</comment>
<comment type="interaction">
    <interactant intactId="EBI-1049004">
        <id>P57105</id>
    </interactant>
    <interactant intactId="EBI-10264970">
        <id>Q8N1Q8</id>
        <label>THEM5</label>
    </interactant>
    <organismsDiffer>false</organismsDiffer>
    <experiments>3</experiments>
</comment>
<comment type="interaction">
    <interactant intactId="EBI-1049004">
        <id>P57105</id>
    </interactant>
    <interactant intactId="EBI-12947623">
        <id>Q96MV1</id>
        <label>TLCD4</label>
    </interactant>
    <organismsDiffer>false</organismsDiffer>
    <experiments>3</experiments>
</comment>
<comment type="interaction">
    <interactant intactId="EBI-1049004">
        <id>P57105</id>
    </interactant>
    <interactant intactId="EBI-3922699">
        <id>Q96IK0</id>
        <label>TMEM101</label>
    </interactant>
    <organismsDiffer>false</organismsDiffer>
    <experiments>3</experiments>
</comment>
<comment type="interaction">
    <interactant intactId="EBI-1049004">
        <id>P57105</id>
    </interactant>
    <interactant intactId="EBI-8638294">
        <id>Q9NUH8</id>
        <label>TMEM14B</label>
    </interactant>
    <organismsDiffer>false</organismsDiffer>
    <experiments>3</experiments>
</comment>
<comment type="interaction">
    <interactant intactId="EBI-1049004">
        <id>P57105</id>
    </interactant>
    <interactant intactId="EBI-10315004">
        <id>Q9NWH2</id>
        <label>TMEM242</label>
    </interactant>
    <organismsDiffer>false</organismsDiffer>
    <experiments>3</experiments>
</comment>
<comment type="interaction">
    <interactant intactId="EBI-1049004">
        <id>P57105</id>
    </interactant>
    <interactant intactId="EBI-739895">
        <id>Q8N6Y0</id>
        <label>USHBP1</label>
    </interactant>
    <organismsDiffer>false</organismsDiffer>
    <experiments>6</experiments>
</comment>
<comment type="subcellular location">
    <subcellularLocation>
        <location evidence="6">Mitochondrion outer membrane</location>
    </subcellularLocation>
</comment>
<dbReference type="EMBL" id="AY534623">
    <property type="protein sequence ID" value="AAT01566.1"/>
    <property type="molecule type" value="mRNA"/>
</dbReference>
<dbReference type="EMBL" id="AK002133">
    <property type="protein sequence ID" value="BAA92098.1"/>
    <property type="molecule type" value="mRNA"/>
</dbReference>
<dbReference type="EMBL" id="CH471061">
    <property type="protein sequence ID" value="EAW81032.1"/>
    <property type="molecule type" value="Genomic_DNA"/>
</dbReference>
<dbReference type="EMBL" id="BC007704">
    <property type="protein sequence ID" value="AAH07704.1"/>
    <property type="molecule type" value="mRNA"/>
</dbReference>
<dbReference type="CCDS" id="CCDS9803.1"/>
<dbReference type="RefSeq" id="NP_060843.2">
    <property type="nucleotide sequence ID" value="NM_018373.3"/>
</dbReference>
<dbReference type="PDB" id="2ENO">
    <property type="method" value="NMR"/>
    <property type="chains" value="A=1-107"/>
</dbReference>
<dbReference type="PDB" id="2JIK">
    <property type="method" value="X-ray"/>
    <property type="resolution" value="1.35 A"/>
    <property type="chains" value="A/B=6-100"/>
</dbReference>
<dbReference type="PDB" id="2JIN">
    <property type="method" value="X-ray"/>
    <property type="resolution" value="1.50 A"/>
    <property type="chains" value="A=4-99"/>
</dbReference>
<dbReference type="PDB" id="7P73">
    <property type="method" value="X-ray"/>
    <property type="resolution" value="1.85 A"/>
    <property type="chains" value="A=6-103"/>
</dbReference>
<dbReference type="PDB" id="7P74">
    <property type="method" value="X-ray"/>
    <property type="resolution" value="1.90 A"/>
    <property type="chains" value="A=6-103"/>
</dbReference>
<dbReference type="PDB" id="7PC9">
    <property type="method" value="X-ray"/>
    <property type="resolution" value="2.40 A"/>
    <property type="chains" value="A/B=6-103"/>
</dbReference>
<dbReference type="PDB" id="7R2M">
    <property type="method" value="X-ray"/>
    <property type="resolution" value="2.40 A"/>
    <property type="chains" value="A/D=6-103"/>
</dbReference>
<dbReference type="PDB" id="7R2T">
    <property type="method" value="X-ray"/>
    <property type="resolution" value="2.50 A"/>
    <property type="chains" value="A=6-103"/>
</dbReference>
<dbReference type="PDB" id="8AEL">
    <property type="method" value="X-ray"/>
    <property type="resolution" value="2.20 A"/>
    <property type="chains" value="A=7-103"/>
</dbReference>
<dbReference type="PDBsum" id="2ENO"/>
<dbReference type="PDBsum" id="2JIK"/>
<dbReference type="PDBsum" id="2JIN"/>
<dbReference type="PDBsum" id="7P73"/>
<dbReference type="PDBsum" id="7P74"/>
<dbReference type="PDBsum" id="7PC9"/>
<dbReference type="PDBsum" id="7R2M"/>
<dbReference type="PDBsum" id="7R2T"/>
<dbReference type="PDBsum" id="8AEL"/>
<dbReference type="SMR" id="P57105"/>
<dbReference type="BioGRID" id="120614">
    <property type="interactions" value="165"/>
</dbReference>
<dbReference type="FunCoup" id="P57105">
    <property type="interactions" value="833"/>
</dbReference>
<dbReference type="IntAct" id="P57105">
    <property type="interactions" value="91"/>
</dbReference>
<dbReference type="STRING" id="9606.ENSP00000256366"/>
<dbReference type="TCDB" id="8.A.24.1.5">
    <property type="family name" value="the ezrin/radixin/moesin-binding phosphoprotein 50 (ebp50) family"/>
</dbReference>
<dbReference type="GlyGen" id="P57105">
    <property type="glycosylation" value="1 site, 1 N-linked glycan (1 site)"/>
</dbReference>
<dbReference type="iPTMnet" id="P57105"/>
<dbReference type="PhosphoSitePlus" id="P57105"/>
<dbReference type="BioMuta" id="SYNJ2BP"/>
<dbReference type="DMDM" id="22261816"/>
<dbReference type="jPOST" id="P57105"/>
<dbReference type="MassIVE" id="P57105"/>
<dbReference type="PaxDb" id="9606-ENSP00000256366"/>
<dbReference type="PeptideAtlas" id="P57105"/>
<dbReference type="ProteomicsDB" id="57004"/>
<dbReference type="Pumba" id="P57105"/>
<dbReference type="TopDownProteomics" id="P57105"/>
<dbReference type="Antibodypedia" id="46">
    <property type="antibodies" value="126 antibodies from 21 providers"/>
</dbReference>
<dbReference type="DNASU" id="55333"/>
<dbReference type="Ensembl" id="ENST00000256366.6">
    <property type="protein sequence ID" value="ENSP00000256366.4"/>
    <property type="gene ID" value="ENSG00000213463.5"/>
</dbReference>
<dbReference type="GeneID" id="55333"/>
<dbReference type="KEGG" id="hsa:55333"/>
<dbReference type="MANE-Select" id="ENST00000256366.6">
    <property type="protein sequence ID" value="ENSP00000256366.4"/>
    <property type="RefSeq nucleotide sequence ID" value="NM_018373.3"/>
    <property type="RefSeq protein sequence ID" value="NP_060843.2"/>
</dbReference>
<dbReference type="UCSC" id="uc001xmc.5">
    <property type="organism name" value="human"/>
</dbReference>
<dbReference type="AGR" id="HGNC:18955"/>
<dbReference type="CTD" id="55333"/>
<dbReference type="DisGeNET" id="55333"/>
<dbReference type="GeneCards" id="SYNJ2BP"/>
<dbReference type="HGNC" id="HGNC:18955">
    <property type="gene designation" value="SYNJ2BP"/>
</dbReference>
<dbReference type="HPA" id="ENSG00000213463">
    <property type="expression patterns" value="Low tissue specificity"/>
</dbReference>
<dbReference type="MIM" id="609411">
    <property type="type" value="gene"/>
</dbReference>
<dbReference type="neXtProt" id="NX_P57105"/>
<dbReference type="OpenTargets" id="ENSG00000213463"/>
<dbReference type="PharmGKB" id="PA38768"/>
<dbReference type="VEuPathDB" id="HostDB:ENSG00000213463"/>
<dbReference type="eggNOG" id="KOG3528">
    <property type="taxonomic scope" value="Eukaryota"/>
</dbReference>
<dbReference type="GeneTree" id="ENSGT00830000128402"/>
<dbReference type="HOGENOM" id="CLU_149433_1_0_1"/>
<dbReference type="InParanoid" id="P57105"/>
<dbReference type="OMA" id="FRNAGCD"/>
<dbReference type="OrthoDB" id="123971at2759"/>
<dbReference type="PAN-GO" id="P57105">
    <property type="GO annotations" value="10 GO annotations based on evolutionary models"/>
</dbReference>
<dbReference type="PhylomeDB" id="P57105"/>
<dbReference type="TreeFam" id="TF318964"/>
<dbReference type="PathwayCommons" id="P57105"/>
<dbReference type="SignaLink" id="P57105"/>
<dbReference type="BioGRID-ORCS" id="55333">
    <property type="hits" value="12 hits in 1138 CRISPR screens"/>
</dbReference>
<dbReference type="EvolutionaryTrace" id="P57105"/>
<dbReference type="GeneWiki" id="SYNJ2BP"/>
<dbReference type="GenomeRNAi" id="55333"/>
<dbReference type="Pharos" id="P57105">
    <property type="development level" value="Tbio"/>
</dbReference>
<dbReference type="PRO" id="PR:P57105"/>
<dbReference type="Proteomes" id="UP000005640">
    <property type="component" value="Chromosome 14"/>
</dbReference>
<dbReference type="RNAct" id="P57105">
    <property type="molecule type" value="protein"/>
</dbReference>
<dbReference type="Bgee" id="ENSG00000213463">
    <property type="expression patterns" value="Expressed in renal medulla and 209 other cell types or tissues"/>
</dbReference>
<dbReference type="ExpressionAtlas" id="P57105">
    <property type="expression patterns" value="baseline and differential"/>
</dbReference>
<dbReference type="GO" id="GO:0005741">
    <property type="term" value="C:mitochondrial outer membrane"/>
    <property type="evidence" value="ECO:0000314"/>
    <property type="project" value="UniProtKB"/>
</dbReference>
<dbReference type="GO" id="GO:0005739">
    <property type="term" value="C:mitochondrion"/>
    <property type="evidence" value="ECO:0000314"/>
    <property type="project" value="UniProtKB"/>
</dbReference>
<dbReference type="GO" id="GO:0016525">
    <property type="term" value="P:negative regulation of angiogenesis"/>
    <property type="evidence" value="ECO:0000315"/>
    <property type="project" value="UniProtKB"/>
</dbReference>
<dbReference type="GO" id="GO:0010596">
    <property type="term" value="P:negative regulation of endothelial cell migration"/>
    <property type="evidence" value="ECO:0000315"/>
    <property type="project" value="UniProtKB"/>
</dbReference>
<dbReference type="GO" id="GO:0001937">
    <property type="term" value="P:negative regulation of endothelial cell proliferation"/>
    <property type="evidence" value="ECO:0000315"/>
    <property type="project" value="UniProtKB"/>
</dbReference>
<dbReference type="GO" id="GO:0070373">
    <property type="term" value="P:negative regulation of ERK1 and ERK2 cascade"/>
    <property type="evidence" value="ECO:0000314"/>
    <property type="project" value="UniProtKB"/>
</dbReference>
<dbReference type="GO" id="GO:1903671">
    <property type="term" value="P:negative regulation of sprouting angiogenesis"/>
    <property type="evidence" value="ECO:0000315"/>
    <property type="project" value="UniProtKB"/>
</dbReference>
<dbReference type="GO" id="GO:0006605">
    <property type="term" value="P:protein targeting"/>
    <property type="evidence" value="ECO:0007669"/>
    <property type="project" value="Ensembl"/>
</dbReference>
<dbReference type="GO" id="GO:0030100">
    <property type="term" value="P:regulation of endocytosis"/>
    <property type="evidence" value="ECO:0007669"/>
    <property type="project" value="Ensembl"/>
</dbReference>
<dbReference type="GO" id="GO:0008593">
    <property type="term" value="P:regulation of Notch signaling pathway"/>
    <property type="evidence" value="ECO:0000315"/>
    <property type="project" value="UniProtKB"/>
</dbReference>
<dbReference type="GO" id="GO:0007266">
    <property type="term" value="P:Rho protein signal transduction"/>
    <property type="evidence" value="ECO:0007669"/>
    <property type="project" value="Ensembl"/>
</dbReference>
<dbReference type="CDD" id="cd06709">
    <property type="entry name" value="PDZ_SYNJ2BP-like"/>
    <property type="match status" value="1"/>
</dbReference>
<dbReference type="FunFam" id="2.30.42.10:FF:000161">
    <property type="entry name" value="Synaptojanin-2-binding protein"/>
    <property type="match status" value="1"/>
</dbReference>
<dbReference type="Gene3D" id="2.30.42.10">
    <property type="match status" value="1"/>
</dbReference>
<dbReference type="InterPro" id="IPR001478">
    <property type="entry name" value="PDZ"/>
</dbReference>
<dbReference type="InterPro" id="IPR036034">
    <property type="entry name" value="PDZ_sf"/>
</dbReference>
<dbReference type="InterPro" id="IPR050614">
    <property type="entry name" value="Synaptic_Scaffolding_LAP-MAGUK"/>
</dbReference>
<dbReference type="PANTHER" id="PTHR23119">
    <property type="entry name" value="DISCS LARGE"/>
    <property type="match status" value="1"/>
</dbReference>
<dbReference type="PANTHER" id="PTHR23119:SF51">
    <property type="entry name" value="DISKS LARGE 1 TUMOR SUPPRESSOR PROTEIN"/>
    <property type="match status" value="1"/>
</dbReference>
<dbReference type="Pfam" id="PF00595">
    <property type="entry name" value="PDZ"/>
    <property type="match status" value="1"/>
</dbReference>
<dbReference type="SMART" id="SM00228">
    <property type="entry name" value="PDZ"/>
    <property type="match status" value="1"/>
</dbReference>
<dbReference type="SUPFAM" id="SSF50156">
    <property type="entry name" value="PDZ domain-like"/>
    <property type="match status" value="1"/>
</dbReference>
<dbReference type="PROSITE" id="PS50106">
    <property type="entry name" value="PDZ"/>
    <property type="match status" value="1"/>
</dbReference>
<proteinExistence type="evidence at protein level"/>
<sequence length="145" mass="15928">MNGRVDYLVTEEEINLTRGPSGLGFNIVGGTDQQYVSNDSGIYVSRIKENGAAALDGRLQEGDKILSVNGQDLKNLLHQDAVDLFRNAGYAVSLRVQHRLQVQNGPIGHRGEGDPSGIPIFMVLVPVFALTMVAAWAFMRYRQQL</sequence>
<organism>
    <name type="scientific">Homo sapiens</name>
    <name type="common">Human</name>
    <dbReference type="NCBI Taxonomy" id="9606"/>
    <lineage>
        <taxon>Eukaryota</taxon>
        <taxon>Metazoa</taxon>
        <taxon>Chordata</taxon>
        <taxon>Craniata</taxon>
        <taxon>Vertebrata</taxon>
        <taxon>Euteleostomi</taxon>
        <taxon>Mammalia</taxon>
        <taxon>Eutheria</taxon>
        <taxon>Euarchontoglires</taxon>
        <taxon>Primates</taxon>
        <taxon>Haplorrhini</taxon>
        <taxon>Catarrhini</taxon>
        <taxon>Hominidae</taxon>
        <taxon>Homo</taxon>
    </lineage>
</organism>